<name>TCX7_ARATH</name>
<feature type="chain" id="PRO_0000418172" description="Protein tesmin/TSO1-like CXC 7">
    <location>
        <begin position="1"/>
        <end position="459"/>
    </location>
</feature>
<feature type="domain" description="CRC" evidence="2">
    <location>
        <begin position="93"/>
        <end position="217"/>
    </location>
</feature>
<feature type="region of interest" description="Disordered" evidence="3">
    <location>
        <begin position="1"/>
        <end position="96"/>
    </location>
</feature>
<feature type="region of interest" description="Disordered" evidence="3">
    <location>
        <begin position="340"/>
        <end position="362"/>
    </location>
</feature>
<feature type="region of interest" description="Disordered" evidence="3">
    <location>
        <begin position="395"/>
        <end position="420"/>
    </location>
</feature>
<feature type="compositionally biased region" description="Polar residues" evidence="3">
    <location>
        <begin position="1"/>
        <end position="16"/>
    </location>
</feature>
<feature type="compositionally biased region" description="Polar residues" evidence="3">
    <location>
        <begin position="38"/>
        <end position="49"/>
    </location>
</feature>
<feature type="compositionally biased region" description="Polar residues" evidence="3">
    <location>
        <begin position="60"/>
        <end position="75"/>
    </location>
</feature>
<feature type="compositionally biased region" description="Basic and acidic residues" evidence="3">
    <location>
        <begin position="79"/>
        <end position="89"/>
    </location>
</feature>
<feature type="compositionally biased region" description="Basic and acidic residues" evidence="3">
    <location>
        <begin position="340"/>
        <end position="349"/>
    </location>
</feature>
<feature type="compositionally biased region" description="Basic and acidic residues" evidence="3">
    <location>
        <begin position="395"/>
        <end position="413"/>
    </location>
</feature>
<sequence length="459" mass="51357">MEDLSNQNLLPRQSDISIPAEKMDSFQKSLEPPPCSPVKSSQQSETEVTPPQKPPLHQFGHNQVQKNRVSNQDPSTSRRHNEVESKENTPNKQQKHCNCKNSKCLKLYCECFASGSYCNGCNCVNCHNKLENESSRQVAISGILERNPDAFKPKIAGSPHGMKDLQENVQQVLLIGKHSKGCHCRKSGCLKKYCECYQANILCSENCRCQDCKNFEGSEERKALLHGSQVSDTYIQQMTNAAVNRAIDMSAYLYPPESRKRKSKDISDSVVSSYGVQYQRANHVRRNGENSLFSLPNNKAVSGSTTSAYRSSWSNTFQPHHVRELCSLLVSNSVDVANKLSDKGRKNDKGPSSLDGAQRVANEINDSPDCVLDANRMDEKPISPATRALMCDEEHEIGSEKETSARVKTSQEKEDTDTSSGIYLEQERQILSIFRDYLIQLSNRARINGKNIKSNTNPS</sequence>
<proteinExistence type="evidence at protein level"/>
<evidence type="ECO:0000250" key="1"/>
<evidence type="ECO:0000255" key="2">
    <source>
        <dbReference type="PROSITE-ProRule" id="PRU00971"/>
    </source>
</evidence>
<evidence type="ECO:0000256" key="3">
    <source>
        <dbReference type="SAM" id="MobiDB-lite"/>
    </source>
</evidence>
<evidence type="ECO:0000305" key="4"/>
<keyword id="KW-0217">Developmental protein</keyword>
<keyword id="KW-0479">Metal-binding</keyword>
<keyword id="KW-0539">Nucleus</keyword>
<keyword id="KW-1185">Reference proteome</keyword>
<keyword id="KW-0862">Zinc</keyword>
<dbReference type="EMBL" id="AC005405">
    <property type="status" value="NOT_ANNOTATED_CDS"/>
    <property type="molecule type" value="Genomic_DNA"/>
</dbReference>
<dbReference type="EMBL" id="CP002688">
    <property type="protein sequence ID" value="AED93488.1"/>
    <property type="molecule type" value="Genomic_DNA"/>
</dbReference>
<dbReference type="EMBL" id="BX830951">
    <property type="status" value="NOT_ANNOTATED_CDS"/>
    <property type="molecule type" value="mRNA"/>
</dbReference>
<dbReference type="RefSeq" id="NP_197951.2">
    <property type="nucleotide sequence ID" value="NM_122480.3"/>
</dbReference>
<dbReference type="SMR" id="F4JY84"/>
<dbReference type="BioGRID" id="17923">
    <property type="interactions" value="2"/>
</dbReference>
<dbReference type="FunCoup" id="F4JY84">
    <property type="interactions" value="11"/>
</dbReference>
<dbReference type="IntAct" id="F4JY84">
    <property type="interactions" value="3"/>
</dbReference>
<dbReference type="STRING" id="3702.F4JY84"/>
<dbReference type="iPTMnet" id="F4JY84"/>
<dbReference type="PaxDb" id="3702-AT5G25790.1"/>
<dbReference type="EnsemblPlants" id="AT5G25790.1">
    <property type="protein sequence ID" value="AT5G25790.1"/>
    <property type="gene ID" value="AT5G25790"/>
</dbReference>
<dbReference type="GeneID" id="832648"/>
<dbReference type="Gramene" id="AT5G25790.1">
    <property type="protein sequence ID" value="AT5G25790.1"/>
    <property type="gene ID" value="AT5G25790"/>
</dbReference>
<dbReference type="KEGG" id="ath:AT5G25790"/>
<dbReference type="Araport" id="AT5G25790"/>
<dbReference type="TAIR" id="AT5G25790"/>
<dbReference type="eggNOG" id="KOG1171">
    <property type="taxonomic scope" value="Eukaryota"/>
</dbReference>
<dbReference type="HOGENOM" id="CLU_020949_0_0_1"/>
<dbReference type="InParanoid" id="F4JY84"/>
<dbReference type="OMA" id="LMCDEQG"/>
<dbReference type="PhylomeDB" id="F4JY84"/>
<dbReference type="PRO" id="PR:F4JY84"/>
<dbReference type="Proteomes" id="UP000006548">
    <property type="component" value="Chromosome 5"/>
</dbReference>
<dbReference type="ExpressionAtlas" id="F4JY84">
    <property type="expression patterns" value="baseline and differential"/>
</dbReference>
<dbReference type="GO" id="GO:0005634">
    <property type="term" value="C:nucleus"/>
    <property type="evidence" value="ECO:0007669"/>
    <property type="project" value="UniProtKB-SubCell"/>
</dbReference>
<dbReference type="GO" id="GO:0003700">
    <property type="term" value="F:DNA-binding transcription factor activity"/>
    <property type="evidence" value="ECO:0000250"/>
    <property type="project" value="TAIR"/>
</dbReference>
<dbReference type="GO" id="GO:0046872">
    <property type="term" value="F:metal ion binding"/>
    <property type="evidence" value="ECO:0007669"/>
    <property type="project" value="UniProtKB-KW"/>
</dbReference>
<dbReference type="InterPro" id="IPR005172">
    <property type="entry name" value="CRC"/>
</dbReference>
<dbReference type="InterPro" id="IPR028307">
    <property type="entry name" value="Lin-54_fam"/>
</dbReference>
<dbReference type="InterPro" id="IPR033467">
    <property type="entry name" value="Tesmin/TSO1-like_CXC"/>
</dbReference>
<dbReference type="PANTHER" id="PTHR12446:SF46">
    <property type="entry name" value="PROTEIN TESMIN_TSO1-LIKE CXC 7"/>
    <property type="match status" value="1"/>
</dbReference>
<dbReference type="PANTHER" id="PTHR12446">
    <property type="entry name" value="TESMIN/TSO1-RELATED"/>
    <property type="match status" value="1"/>
</dbReference>
<dbReference type="Pfam" id="PF03638">
    <property type="entry name" value="TCR"/>
    <property type="match status" value="2"/>
</dbReference>
<dbReference type="SMART" id="SM01114">
    <property type="entry name" value="CXC"/>
    <property type="match status" value="2"/>
</dbReference>
<dbReference type="PROSITE" id="PS51634">
    <property type="entry name" value="CRC"/>
    <property type="match status" value="1"/>
</dbReference>
<gene>
    <name type="primary">TCX7</name>
    <name type="ordered locus">At5g25790</name>
    <name type="ORF">F18A17.40</name>
</gene>
<reference key="1">
    <citation type="journal article" date="2000" name="Nature">
        <title>Sequence and analysis of chromosome 5 of the plant Arabidopsis thaliana.</title>
        <authorList>
            <person name="Tabata S."/>
            <person name="Kaneko T."/>
            <person name="Nakamura Y."/>
            <person name="Kotani H."/>
            <person name="Kato T."/>
            <person name="Asamizu E."/>
            <person name="Miyajima N."/>
            <person name="Sasamoto S."/>
            <person name="Kimura T."/>
            <person name="Hosouchi T."/>
            <person name="Kawashima K."/>
            <person name="Kohara M."/>
            <person name="Matsumoto M."/>
            <person name="Matsuno A."/>
            <person name="Muraki A."/>
            <person name="Nakayama S."/>
            <person name="Nakazaki N."/>
            <person name="Naruo K."/>
            <person name="Okumura S."/>
            <person name="Shinpo S."/>
            <person name="Takeuchi C."/>
            <person name="Wada T."/>
            <person name="Watanabe A."/>
            <person name="Yamada M."/>
            <person name="Yasuda M."/>
            <person name="Sato S."/>
            <person name="de la Bastide M."/>
            <person name="Huang E."/>
            <person name="Spiegel L."/>
            <person name="Gnoj L."/>
            <person name="O'Shaughnessy A."/>
            <person name="Preston R."/>
            <person name="Habermann K."/>
            <person name="Murray J."/>
            <person name="Johnson D."/>
            <person name="Rohlfing T."/>
            <person name="Nelson J."/>
            <person name="Stoneking T."/>
            <person name="Pepin K."/>
            <person name="Spieth J."/>
            <person name="Sekhon M."/>
            <person name="Armstrong J."/>
            <person name="Becker M."/>
            <person name="Belter E."/>
            <person name="Cordum H."/>
            <person name="Cordes M."/>
            <person name="Courtney L."/>
            <person name="Courtney W."/>
            <person name="Dante M."/>
            <person name="Du H."/>
            <person name="Edwards J."/>
            <person name="Fryman J."/>
            <person name="Haakensen B."/>
            <person name="Lamar E."/>
            <person name="Latreille P."/>
            <person name="Leonard S."/>
            <person name="Meyer R."/>
            <person name="Mulvaney E."/>
            <person name="Ozersky P."/>
            <person name="Riley A."/>
            <person name="Strowmatt C."/>
            <person name="Wagner-McPherson C."/>
            <person name="Wollam A."/>
            <person name="Yoakum M."/>
            <person name="Bell M."/>
            <person name="Dedhia N."/>
            <person name="Parnell L."/>
            <person name="Shah R."/>
            <person name="Rodriguez M."/>
            <person name="Hoon See L."/>
            <person name="Vil D."/>
            <person name="Baker J."/>
            <person name="Kirchoff K."/>
            <person name="Toth K."/>
            <person name="King L."/>
            <person name="Bahret A."/>
            <person name="Miller B."/>
            <person name="Marra M.A."/>
            <person name="Martienssen R."/>
            <person name="McCombie W.R."/>
            <person name="Wilson R.K."/>
            <person name="Murphy G."/>
            <person name="Bancroft I."/>
            <person name="Volckaert G."/>
            <person name="Wambutt R."/>
            <person name="Duesterhoeft A."/>
            <person name="Stiekema W."/>
            <person name="Pohl T."/>
            <person name="Entian K.-D."/>
            <person name="Terryn N."/>
            <person name="Hartley N."/>
            <person name="Bent E."/>
            <person name="Johnson S."/>
            <person name="Langham S.-A."/>
            <person name="McCullagh B."/>
            <person name="Robben J."/>
            <person name="Grymonprez B."/>
            <person name="Zimmermann W."/>
            <person name="Ramsperger U."/>
            <person name="Wedler H."/>
            <person name="Balke K."/>
            <person name="Wedler E."/>
            <person name="Peters S."/>
            <person name="van Staveren M."/>
            <person name="Dirkse W."/>
            <person name="Mooijman P."/>
            <person name="Klein Lankhorst R."/>
            <person name="Weitzenegger T."/>
            <person name="Bothe G."/>
            <person name="Rose M."/>
            <person name="Hauf J."/>
            <person name="Berneiser S."/>
            <person name="Hempel S."/>
            <person name="Feldpausch M."/>
            <person name="Lamberth S."/>
            <person name="Villarroel R."/>
            <person name="Gielen J."/>
            <person name="Ardiles W."/>
            <person name="Bents O."/>
            <person name="Lemcke K."/>
            <person name="Kolesov G."/>
            <person name="Mayer K.F.X."/>
            <person name="Rudd S."/>
            <person name="Schoof H."/>
            <person name="Schueller C."/>
            <person name="Zaccaria P."/>
            <person name="Mewes H.-W."/>
            <person name="Bevan M."/>
            <person name="Fransz P.F."/>
        </authorList>
    </citation>
    <scope>NUCLEOTIDE SEQUENCE [LARGE SCALE GENOMIC DNA]</scope>
    <source>
        <strain>cv. Columbia</strain>
    </source>
</reference>
<reference key="2">
    <citation type="journal article" date="2017" name="Plant J.">
        <title>Araport11: a complete reannotation of the Arabidopsis thaliana reference genome.</title>
        <authorList>
            <person name="Cheng C.Y."/>
            <person name="Krishnakumar V."/>
            <person name="Chan A.P."/>
            <person name="Thibaud-Nissen F."/>
            <person name="Schobel S."/>
            <person name="Town C.D."/>
        </authorList>
    </citation>
    <scope>GENOME REANNOTATION</scope>
    <source>
        <strain>cv. Columbia</strain>
    </source>
</reference>
<reference key="3">
    <citation type="journal article" date="2004" name="Genome Res.">
        <title>Whole genome sequence comparisons and 'full-length' cDNA sequences: a combined approach to evaluate and improve Arabidopsis genome annotation.</title>
        <authorList>
            <person name="Castelli V."/>
            <person name="Aury J.-M."/>
            <person name="Jaillon O."/>
            <person name="Wincker P."/>
            <person name="Clepet C."/>
            <person name="Menard M."/>
            <person name="Cruaud C."/>
            <person name="Quetier F."/>
            <person name="Scarpelli C."/>
            <person name="Schaechter V."/>
            <person name="Temple G."/>
            <person name="Caboche M."/>
            <person name="Weissenbach J."/>
            <person name="Salanoubat M."/>
        </authorList>
    </citation>
    <scope>NUCLEOTIDE SEQUENCE [LARGE SCALE MRNA]</scope>
    <source>
        <strain>cv. Columbia</strain>
    </source>
</reference>
<reference key="4">
    <citation type="journal article" date="2007" name="J. Exp. Bot.">
        <title>The conserved cysteine-rich domain of a tesmin/TSO1-like protein binds zinc in vitro and TSO1 is required for both male and female fertility in Arabidopsis thaliana.</title>
        <authorList>
            <person name="Andersen S.U."/>
            <person name="Algreen-Petersen R.G."/>
            <person name="Hoedl M."/>
            <person name="Jurkiewicz A."/>
            <person name="Cvitanich C."/>
            <person name="Braunschweig U."/>
            <person name="Schauser L."/>
            <person name="Oh S.A."/>
            <person name="Twell D."/>
            <person name="Jensen E.O."/>
        </authorList>
    </citation>
    <scope>GENE FAMILY</scope>
    <scope>NOMENCLATURE</scope>
    <scope>ZINC-BINDING</scope>
</reference>
<comment type="function">
    <text evidence="1">Plays a role in development of both male and female reproductive tissues.</text>
</comment>
<comment type="interaction">
    <interactant intactId="EBI-15193079">
        <id>F4JY84</id>
    </interactant>
    <interactant intactId="EBI-15193077">
        <id>O23210</id>
        <label>SCL15</label>
    </interactant>
    <organismsDiffer>false</organismsDiffer>
    <experiments>3</experiments>
</comment>
<comment type="subcellular location">
    <subcellularLocation>
        <location evidence="4">Nucleus</location>
    </subcellularLocation>
</comment>
<comment type="domain">
    <text>The cysteine-rich domain CRC binds zinc in vitro.</text>
</comment>
<comment type="similarity">
    <text evidence="4">Belongs to the lin-54 family.</text>
</comment>
<comment type="sequence caution" evidence="4">
    <conflict type="miscellaneous discrepancy">
        <sequence resource="EMBL" id="BX830951"/>
    </conflict>
    <text>Sequencing errors.</text>
</comment>
<organism>
    <name type="scientific">Arabidopsis thaliana</name>
    <name type="common">Mouse-ear cress</name>
    <dbReference type="NCBI Taxonomy" id="3702"/>
    <lineage>
        <taxon>Eukaryota</taxon>
        <taxon>Viridiplantae</taxon>
        <taxon>Streptophyta</taxon>
        <taxon>Embryophyta</taxon>
        <taxon>Tracheophyta</taxon>
        <taxon>Spermatophyta</taxon>
        <taxon>Magnoliopsida</taxon>
        <taxon>eudicotyledons</taxon>
        <taxon>Gunneridae</taxon>
        <taxon>Pentapetalae</taxon>
        <taxon>rosids</taxon>
        <taxon>malvids</taxon>
        <taxon>Brassicales</taxon>
        <taxon>Brassicaceae</taxon>
        <taxon>Camelineae</taxon>
        <taxon>Arabidopsis</taxon>
    </lineage>
</organism>
<protein>
    <recommendedName>
        <fullName>Protein tesmin/TSO1-like CXC 7</fullName>
        <shortName>AtTCX7</shortName>
    </recommendedName>
</protein>
<accession>F4JY84</accession>